<proteinExistence type="evidence at transcript level"/>
<evidence type="ECO:0000250" key="1">
    <source>
        <dbReference type="UniProtKB" id="P00341"/>
    </source>
</evidence>
<evidence type="ECO:0000250" key="2">
    <source>
        <dbReference type="UniProtKB" id="P07195"/>
    </source>
</evidence>
<evidence type="ECO:0000255" key="3"/>
<evidence type="ECO:0000312" key="4">
    <source>
        <dbReference type="EMBL" id="AAH76340.1"/>
    </source>
</evidence>
<evidence type="ECO:0000312" key="5">
    <source>
        <dbReference type="ZFIN" id="ZDB-GENE-040718-176"/>
    </source>
</evidence>
<protein>
    <recommendedName>
        <fullName evidence="2">L-lactate dehydrogenase B-B chain</fullName>
        <shortName evidence="2">LDH-B-B</shortName>
        <ecNumber>1.1.1.27</ecNumber>
    </recommendedName>
</protein>
<gene>
    <name evidence="5" type="primary">ldhbb</name>
    <name type="ORF">zgc:92882</name>
</gene>
<accession>Q6DGK2</accession>
<sequence length="334" mass="36710">MASVLQKLITPLFSGPLEPPRNKVTVVGVGQVGMACAVSVLLRELADELALVDVVEDKLKGEMMDLQHGSLFLKTPKIVSGKDYSVTANSRIVVVTAGVRQQEGESRLNLVQRNVNIFKHIIPQIVKYSPNCILIVVSNPVDVLTYVTWKLSGLPKHRVIGSGTNLDSARFRYLMAERLGIHPSSFNGWILGEHGDSSVPVWSGANVAGVSLQKLNPDIGKDTDRENWKETHKKVVDSAYEVIRLKGYTNWAIGLSVADLTESIMKNLNRVHPVSTMVKGMYGISDEVYLSLPCVLNSAGVGSVVNMTLTVDEVSQLKKSADMLWHIQRDLRDL</sequence>
<comment type="catalytic activity">
    <reaction evidence="2">
        <text>(S)-lactate + NAD(+) = pyruvate + NADH + H(+)</text>
        <dbReference type="Rhea" id="RHEA:23444"/>
        <dbReference type="ChEBI" id="CHEBI:15361"/>
        <dbReference type="ChEBI" id="CHEBI:15378"/>
        <dbReference type="ChEBI" id="CHEBI:16651"/>
        <dbReference type="ChEBI" id="CHEBI:57540"/>
        <dbReference type="ChEBI" id="CHEBI:57945"/>
        <dbReference type="EC" id="1.1.1.27"/>
    </reaction>
</comment>
<comment type="pathway">
    <text evidence="2">Fermentation; pyruvate fermentation to lactate; (S)-lactate from pyruvate: step 1/1.</text>
</comment>
<comment type="subunit">
    <text evidence="2">Homotetramer.</text>
</comment>
<comment type="subcellular location">
    <subcellularLocation>
        <location evidence="2">Cytoplasm</location>
    </subcellularLocation>
</comment>
<comment type="similarity">
    <text evidence="3">Belongs to the LDH/MDH superfamily. LDH family.</text>
</comment>
<name>LDHBB_DANRE</name>
<feature type="initiator methionine" description="Removed" evidence="2">
    <location>
        <position position="1"/>
    </location>
</feature>
<feature type="chain" id="PRO_0000401128" description="L-lactate dehydrogenase B-B chain" evidence="2">
    <location>
        <begin position="2"/>
        <end position="334"/>
    </location>
</feature>
<feature type="active site" description="Proton acceptor" evidence="2">
    <location>
        <position position="194"/>
    </location>
</feature>
<feature type="binding site" evidence="1">
    <location>
        <begin position="30"/>
        <end position="58"/>
    </location>
    <ligand>
        <name>NAD(+)</name>
        <dbReference type="ChEBI" id="CHEBI:57540"/>
    </ligand>
</feature>
<feature type="binding site" evidence="2">
    <location>
        <position position="100"/>
    </location>
    <ligand>
        <name>NAD(+)</name>
        <dbReference type="ChEBI" id="CHEBI:57540"/>
    </ligand>
</feature>
<feature type="binding site" evidence="2">
    <location>
        <position position="107"/>
    </location>
    <ligand>
        <name>substrate</name>
    </ligand>
</feature>
<feature type="binding site" evidence="2">
    <location>
        <position position="139"/>
    </location>
    <ligand>
        <name>NAD(+)</name>
        <dbReference type="ChEBI" id="CHEBI:57540"/>
    </ligand>
</feature>
<feature type="binding site" evidence="2">
    <location>
        <position position="139"/>
    </location>
    <ligand>
        <name>substrate</name>
    </ligand>
</feature>
<feature type="binding site" evidence="2">
    <location>
        <position position="170"/>
    </location>
    <ligand>
        <name>substrate</name>
    </ligand>
</feature>
<feature type="binding site" evidence="2">
    <location>
        <position position="249"/>
    </location>
    <ligand>
        <name>substrate</name>
    </ligand>
</feature>
<reference evidence="4" key="1">
    <citation type="submission" date="2004-07" db="EMBL/GenBank/DDBJ databases">
        <authorList>
            <consortium name="NIH - Zebrafish Gene Collection (ZGC) project"/>
        </authorList>
    </citation>
    <scope>NUCLEOTIDE SEQUENCE [LARGE SCALE MRNA]</scope>
    <source>
        <tissue evidence="4">Brain</tissue>
    </source>
</reference>
<dbReference type="EC" id="1.1.1.27"/>
<dbReference type="EMBL" id="BC076340">
    <property type="protein sequence ID" value="AAH76340.1"/>
    <property type="molecule type" value="mRNA"/>
</dbReference>
<dbReference type="RefSeq" id="NP_001002474.1">
    <property type="nucleotide sequence ID" value="NM_001002474.1"/>
</dbReference>
<dbReference type="RefSeq" id="NP_001417882.1">
    <property type="nucleotide sequence ID" value="NM_001430953.1"/>
</dbReference>
<dbReference type="RefSeq" id="XP_005170716.1">
    <property type="nucleotide sequence ID" value="XM_005170659.2"/>
</dbReference>
<dbReference type="SMR" id="Q6DGK2"/>
<dbReference type="BioGRID" id="91913">
    <property type="interactions" value="1"/>
</dbReference>
<dbReference type="FunCoup" id="Q6DGK2">
    <property type="interactions" value="1081"/>
</dbReference>
<dbReference type="STRING" id="7955.ENSDARP00000095636"/>
<dbReference type="PaxDb" id="7955-ENSDARP00000106067"/>
<dbReference type="Ensembl" id="ENSDART00000104866">
    <property type="protein sequence ID" value="ENSDARP00000095636"/>
    <property type="gene ID" value="ENSDARG00000071076"/>
</dbReference>
<dbReference type="Ensembl" id="ENSDART00000181143">
    <property type="protein sequence ID" value="ENSDARP00000154861"/>
    <property type="gene ID" value="ENSDARG00000071076"/>
</dbReference>
<dbReference type="GeneID" id="436747"/>
<dbReference type="KEGG" id="dre:436747"/>
<dbReference type="AGR" id="ZFIN:ZDB-GENE-040718-176"/>
<dbReference type="CTD" id="436747"/>
<dbReference type="ZFIN" id="ZDB-GENE-040718-176">
    <property type="gene designation" value="ldhbb"/>
</dbReference>
<dbReference type="eggNOG" id="KOG1495">
    <property type="taxonomic scope" value="Eukaryota"/>
</dbReference>
<dbReference type="InParanoid" id="Q6DGK2"/>
<dbReference type="OMA" id="EHWNELH"/>
<dbReference type="OrthoDB" id="5405561at2759"/>
<dbReference type="PhylomeDB" id="Q6DGK2"/>
<dbReference type="UniPathway" id="UPA00554">
    <property type="reaction ID" value="UER00611"/>
</dbReference>
<dbReference type="PRO" id="PR:Q6DGK2"/>
<dbReference type="Proteomes" id="UP000000437">
    <property type="component" value="Chromosome 25"/>
</dbReference>
<dbReference type="Bgee" id="ENSDARG00000071076">
    <property type="expression patterns" value="Expressed in liver and 18 other cell types or tissues"/>
</dbReference>
<dbReference type="ExpressionAtlas" id="Q6DGK2">
    <property type="expression patterns" value="baseline and differential"/>
</dbReference>
<dbReference type="GO" id="GO:0005739">
    <property type="term" value="C:mitochondrion"/>
    <property type="evidence" value="ECO:0000318"/>
    <property type="project" value="GO_Central"/>
</dbReference>
<dbReference type="GO" id="GO:0004459">
    <property type="term" value="F:L-lactate dehydrogenase activity"/>
    <property type="evidence" value="ECO:0000318"/>
    <property type="project" value="GO_Central"/>
</dbReference>
<dbReference type="GO" id="GO:0006089">
    <property type="term" value="P:lactate metabolic process"/>
    <property type="evidence" value="ECO:0000318"/>
    <property type="project" value="GO_Central"/>
</dbReference>
<dbReference type="GO" id="GO:0006090">
    <property type="term" value="P:pyruvate metabolic process"/>
    <property type="evidence" value="ECO:0000318"/>
    <property type="project" value="GO_Central"/>
</dbReference>
<dbReference type="CDD" id="cd05293">
    <property type="entry name" value="LDH_1"/>
    <property type="match status" value="1"/>
</dbReference>
<dbReference type="FunFam" id="3.40.50.720:FF:000029">
    <property type="entry name" value="L-lactate dehydrogenase A chain"/>
    <property type="match status" value="1"/>
</dbReference>
<dbReference type="FunFam" id="3.90.110.10:FF:000003">
    <property type="entry name" value="L-lactate dehydrogenase A chain"/>
    <property type="match status" value="1"/>
</dbReference>
<dbReference type="Gene3D" id="3.90.110.10">
    <property type="entry name" value="Lactate dehydrogenase/glycoside hydrolase, family 4, C-terminal"/>
    <property type="match status" value="1"/>
</dbReference>
<dbReference type="Gene3D" id="3.40.50.720">
    <property type="entry name" value="NAD(P)-binding Rossmann-like Domain"/>
    <property type="match status" value="1"/>
</dbReference>
<dbReference type="HAMAP" id="MF_00488">
    <property type="entry name" value="Lactate_dehydrog"/>
    <property type="match status" value="1"/>
</dbReference>
<dbReference type="InterPro" id="IPR001557">
    <property type="entry name" value="L-lactate/malate_DH"/>
</dbReference>
<dbReference type="InterPro" id="IPR011304">
    <property type="entry name" value="L-lactate_DH"/>
</dbReference>
<dbReference type="InterPro" id="IPR018177">
    <property type="entry name" value="L-lactate_DH_AS"/>
</dbReference>
<dbReference type="InterPro" id="IPR022383">
    <property type="entry name" value="Lactate/malate_DH_C"/>
</dbReference>
<dbReference type="InterPro" id="IPR001236">
    <property type="entry name" value="Lactate/malate_DH_N"/>
</dbReference>
<dbReference type="InterPro" id="IPR015955">
    <property type="entry name" value="Lactate_DH/Glyco_Ohase_4_C"/>
</dbReference>
<dbReference type="InterPro" id="IPR036291">
    <property type="entry name" value="NAD(P)-bd_dom_sf"/>
</dbReference>
<dbReference type="NCBIfam" id="TIGR01771">
    <property type="entry name" value="L-LDH-NAD"/>
    <property type="match status" value="1"/>
</dbReference>
<dbReference type="NCBIfam" id="NF000824">
    <property type="entry name" value="PRK00066.1"/>
    <property type="match status" value="1"/>
</dbReference>
<dbReference type="NCBIfam" id="NF004863">
    <property type="entry name" value="PRK06223.1"/>
    <property type="match status" value="1"/>
</dbReference>
<dbReference type="PANTHER" id="PTHR43128">
    <property type="entry name" value="L-2-HYDROXYCARBOXYLATE DEHYDROGENASE (NAD(P)(+))"/>
    <property type="match status" value="1"/>
</dbReference>
<dbReference type="PANTHER" id="PTHR43128:SF2">
    <property type="entry name" value="L-LACTATE DEHYDROGENASE B CHAIN"/>
    <property type="match status" value="1"/>
</dbReference>
<dbReference type="Pfam" id="PF02866">
    <property type="entry name" value="Ldh_1_C"/>
    <property type="match status" value="1"/>
</dbReference>
<dbReference type="Pfam" id="PF00056">
    <property type="entry name" value="Ldh_1_N"/>
    <property type="match status" value="1"/>
</dbReference>
<dbReference type="PIRSF" id="PIRSF000102">
    <property type="entry name" value="Lac_mal_DH"/>
    <property type="match status" value="1"/>
</dbReference>
<dbReference type="PRINTS" id="PR00086">
    <property type="entry name" value="LLDHDRGNASE"/>
</dbReference>
<dbReference type="SUPFAM" id="SSF56327">
    <property type="entry name" value="LDH C-terminal domain-like"/>
    <property type="match status" value="1"/>
</dbReference>
<dbReference type="SUPFAM" id="SSF51735">
    <property type="entry name" value="NAD(P)-binding Rossmann-fold domains"/>
    <property type="match status" value="1"/>
</dbReference>
<dbReference type="PROSITE" id="PS00064">
    <property type="entry name" value="L_LDH"/>
    <property type="match status" value="1"/>
</dbReference>
<keyword id="KW-0963">Cytoplasm</keyword>
<keyword id="KW-0520">NAD</keyword>
<keyword id="KW-0560">Oxidoreductase</keyword>
<keyword id="KW-1185">Reference proteome</keyword>
<organism>
    <name type="scientific">Danio rerio</name>
    <name type="common">Zebrafish</name>
    <name type="synonym">Brachydanio rerio</name>
    <dbReference type="NCBI Taxonomy" id="7955"/>
    <lineage>
        <taxon>Eukaryota</taxon>
        <taxon>Metazoa</taxon>
        <taxon>Chordata</taxon>
        <taxon>Craniata</taxon>
        <taxon>Vertebrata</taxon>
        <taxon>Euteleostomi</taxon>
        <taxon>Actinopterygii</taxon>
        <taxon>Neopterygii</taxon>
        <taxon>Teleostei</taxon>
        <taxon>Ostariophysi</taxon>
        <taxon>Cypriniformes</taxon>
        <taxon>Danionidae</taxon>
        <taxon>Danioninae</taxon>
        <taxon>Danio</taxon>
    </lineage>
</organism>